<feature type="initiator methionine" description="Removed" evidence="1">
    <location>
        <position position="1"/>
    </location>
</feature>
<feature type="chain" id="PRO_0000131433" description="Large ribosomal subunit protein uL18">
    <location>
        <begin position="2"/>
        <end position="297"/>
    </location>
</feature>
<feature type="region of interest" description="Disordered" evidence="2">
    <location>
        <begin position="253"/>
        <end position="297"/>
    </location>
</feature>
<feature type="compositionally biased region" description="Basic residues" evidence="2">
    <location>
        <begin position="258"/>
        <end position="268"/>
    </location>
</feature>
<feature type="modified residue" description="N-acetylglycine" evidence="1">
    <location>
        <position position="2"/>
    </location>
</feature>
<feature type="modified residue" description="N6-acetyllysine" evidence="1">
    <location>
        <position position="5"/>
    </location>
</feature>
<feature type="modified residue" description="N6-acetyllysine" evidence="1">
    <location>
        <position position="48"/>
    </location>
</feature>
<feature type="modified residue" description="Phosphoserine" evidence="1">
    <location>
        <position position="185"/>
    </location>
</feature>
<feature type="modified residue" description="N6-acetyllysine; alternate" evidence="7">
    <location>
        <position position="220"/>
    </location>
</feature>
<feature type="modified residue" description="Phosphothreonine" evidence="1">
    <location>
        <position position="232"/>
    </location>
</feature>
<feature type="modified residue" description="Phosphoserine" evidence="1">
    <location>
        <position position="272"/>
    </location>
</feature>
<feature type="cross-link" description="Glycyl lysine isopeptide (Lys-Gly) (interchain with G-Cter in SUMO1); alternate" evidence="1">
    <location>
        <position position="220"/>
    </location>
</feature>
<feature type="cross-link" description="Glycyl lysine isopeptide (Lys-Gly) (interchain with G-Cter in SUMO2); alternate" evidence="1">
    <location>
        <position position="220"/>
    </location>
</feature>
<sequence length="297" mass="34401">MGFVKVVKNKAYFKRYQVRFRRRREGKTDYYARKRLVIQDKNKYNTPKYRMIVRVTNRDIICQIAYARIEGDMIVCAAYAHELPKYGVKVGLTNYAAAYCTGLLLARRLLNRFGMDKIYEGQVEVNGGEYNVESIDGQPGAFTCYLDAGLARTTTGNKVFGALKGAVDGGLSIPHSTKRFPGYDSESKEFNAEVHRKHIMGQNVADYMRYLMEEDEDAYKKQFSQYIKNNVTPDMMEEMYKKAHAAIRENPVYEKKPKREVKKKRWNRPKMSLAQKKDRVAQKKASFLRAQERAAES</sequence>
<name>RL5_MOUSE</name>
<comment type="function">
    <text evidence="1 3">Component of the ribosome, a large ribonucleoprotein complex responsible for the synthesis of proteins in the cell (PubMed:36517592). The small ribosomal subunit (SSU) binds messenger RNAs (mRNAs) and translates the encoded message by selecting cognate aminoacyl-transfer RNA (tRNA) molecules (By similarity). The large subunit (LSU) contains the ribosomal catalytic site termed the peptidyl transferase center (PTC), which catalyzes the formation of peptide bonds, thereby polymerizing the amino acids delivered by tRNAs into a polypeptide chain (By similarity). The nascent polypeptides leave the ribosome through a tunnel in the LSU and interact with protein factors that function in enzymatic processing, targeting, and the membrane insertion of nascent chains at the exit of the ribosomal tunnel (By similarity). As part of the 5S RNP/5S ribonucleoprotein particle it is an essential component of the LSU, required for its formation and the maturation of rRNAs (By similarity). It also couples ribosome biogenesis to p53/TP53 activation (By similarity). As part of the 5S RNP it accumulates in the nucleoplasm and inhibits MDM2, when ribosome biogenesis is perturbed, mediating the stabilization and the activation of TP53 (By similarity).</text>
</comment>
<comment type="subunit">
    <text evidence="1 3">Component of the large ribosomal subunit (LSU) (PubMed:36517592). Part of the 5S RNP complex, which is a LSU subcomplex composed of the 5S RNA, RPL5 and RPL11 (By similarity). Component of a hexameric 5S RNP precursor complex, composed of 5S RNA, RRS1, RPF2/BXDC1, RPL5, RPL11 and HEATR3; this complex acts as a precursor for ribosome assembly (By similarity). Interacts with NVL in an ATP-dependent manner (By similarity). Interacts with RRP1B (By similarity). Interacts with IPO5, IPO7 and KPNB1; these interactions may be involved in RPL5 nuclear import for the assembly of ribosomal subunits (By similarity).</text>
</comment>
<comment type="interaction">
    <interactant intactId="EBI-773940">
        <id>P47962</id>
    </interactant>
    <interactant intactId="EBI-641788">
        <id>P23804</id>
        <label>Mdm2</label>
    </interactant>
    <organismsDiffer>false</organismsDiffer>
    <experiments>3</experiments>
</comment>
<comment type="subcellular location">
    <subcellularLocation>
        <location evidence="3">Cytoplasm</location>
    </subcellularLocation>
    <subcellularLocation>
        <location evidence="1">Nucleus</location>
        <location evidence="1">Nucleolus</location>
    </subcellularLocation>
    <text evidence="1">Although RP5 is functional within the cytoplasm, the assembly of ribosomal subunits occurs in the nucleus. RPL5 nuclear import is mediated by IPO5/RanBP5, IPO7/RanBP7, KPNB1/importin-beta or TPNO1/Trn.</text>
</comment>
<comment type="similarity">
    <text evidence="4">Belongs to the universal ribosomal protein uL18 family.</text>
</comment>
<organism>
    <name type="scientific">Mus musculus</name>
    <name type="common">Mouse</name>
    <dbReference type="NCBI Taxonomy" id="10090"/>
    <lineage>
        <taxon>Eukaryota</taxon>
        <taxon>Metazoa</taxon>
        <taxon>Chordata</taxon>
        <taxon>Craniata</taxon>
        <taxon>Vertebrata</taxon>
        <taxon>Euteleostomi</taxon>
        <taxon>Mammalia</taxon>
        <taxon>Eutheria</taxon>
        <taxon>Euarchontoglires</taxon>
        <taxon>Glires</taxon>
        <taxon>Rodentia</taxon>
        <taxon>Myomorpha</taxon>
        <taxon>Muroidea</taxon>
        <taxon>Muridae</taxon>
        <taxon>Murinae</taxon>
        <taxon>Mus</taxon>
        <taxon>Mus</taxon>
    </lineage>
</organism>
<gene>
    <name type="primary">Rpl5</name>
</gene>
<evidence type="ECO:0000250" key="1">
    <source>
        <dbReference type="UniProtKB" id="P46777"/>
    </source>
</evidence>
<evidence type="ECO:0000256" key="2">
    <source>
        <dbReference type="SAM" id="MobiDB-lite"/>
    </source>
</evidence>
<evidence type="ECO:0000269" key="3">
    <source>
    </source>
</evidence>
<evidence type="ECO:0000305" key="4"/>
<evidence type="ECO:0007744" key="5">
    <source>
        <dbReference type="PDB" id="7CPU"/>
    </source>
</evidence>
<evidence type="ECO:0007744" key="6">
    <source>
        <dbReference type="PDB" id="7CPV"/>
    </source>
</evidence>
<evidence type="ECO:0007744" key="7">
    <source>
    </source>
</evidence>
<reference key="1">
    <citation type="journal article" date="2005" name="Science">
        <title>The transcriptional landscape of the mammalian genome.</title>
        <authorList>
            <person name="Carninci P."/>
            <person name="Kasukawa T."/>
            <person name="Katayama S."/>
            <person name="Gough J."/>
            <person name="Frith M.C."/>
            <person name="Maeda N."/>
            <person name="Oyama R."/>
            <person name="Ravasi T."/>
            <person name="Lenhard B."/>
            <person name="Wells C."/>
            <person name="Kodzius R."/>
            <person name="Shimokawa K."/>
            <person name="Bajic V.B."/>
            <person name="Brenner S.E."/>
            <person name="Batalov S."/>
            <person name="Forrest A.R."/>
            <person name="Zavolan M."/>
            <person name="Davis M.J."/>
            <person name="Wilming L.G."/>
            <person name="Aidinis V."/>
            <person name="Allen J.E."/>
            <person name="Ambesi-Impiombato A."/>
            <person name="Apweiler R."/>
            <person name="Aturaliya R.N."/>
            <person name="Bailey T.L."/>
            <person name="Bansal M."/>
            <person name="Baxter L."/>
            <person name="Beisel K.W."/>
            <person name="Bersano T."/>
            <person name="Bono H."/>
            <person name="Chalk A.M."/>
            <person name="Chiu K.P."/>
            <person name="Choudhary V."/>
            <person name="Christoffels A."/>
            <person name="Clutterbuck D.R."/>
            <person name="Crowe M.L."/>
            <person name="Dalla E."/>
            <person name="Dalrymple B.P."/>
            <person name="de Bono B."/>
            <person name="Della Gatta G."/>
            <person name="di Bernardo D."/>
            <person name="Down T."/>
            <person name="Engstrom P."/>
            <person name="Fagiolini M."/>
            <person name="Faulkner G."/>
            <person name="Fletcher C.F."/>
            <person name="Fukushima T."/>
            <person name="Furuno M."/>
            <person name="Futaki S."/>
            <person name="Gariboldi M."/>
            <person name="Georgii-Hemming P."/>
            <person name="Gingeras T.R."/>
            <person name="Gojobori T."/>
            <person name="Green R.E."/>
            <person name="Gustincich S."/>
            <person name="Harbers M."/>
            <person name="Hayashi Y."/>
            <person name="Hensch T.K."/>
            <person name="Hirokawa N."/>
            <person name="Hill D."/>
            <person name="Huminiecki L."/>
            <person name="Iacono M."/>
            <person name="Ikeo K."/>
            <person name="Iwama A."/>
            <person name="Ishikawa T."/>
            <person name="Jakt M."/>
            <person name="Kanapin A."/>
            <person name="Katoh M."/>
            <person name="Kawasawa Y."/>
            <person name="Kelso J."/>
            <person name="Kitamura H."/>
            <person name="Kitano H."/>
            <person name="Kollias G."/>
            <person name="Krishnan S.P."/>
            <person name="Kruger A."/>
            <person name="Kummerfeld S.K."/>
            <person name="Kurochkin I.V."/>
            <person name="Lareau L.F."/>
            <person name="Lazarevic D."/>
            <person name="Lipovich L."/>
            <person name="Liu J."/>
            <person name="Liuni S."/>
            <person name="McWilliam S."/>
            <person name="Madan Babu M."/>
            <person name="Madera M."/>
            <person name="Marchionni L."/>
            <person name="Matsuda H."/>
            <person name="Matsuzawa S."/>
            <person name="Miki H."/>
            <person name="Mignone F."/>
            <person name="Miyake S."/>
            <person name="Morris K."/>
            <person name="Mottagui-Tabar S."/>
            <person name="Mulder N."/>
            <person name="Nakano N."/>
            <person name="Nakauchi H."/>
            <person name="Ng P."/>
            <person name="Nilsson R."/>
            <person name="Nishiguchi S."/>
            <person name="Nishikawa S."/>
            <person name="Nori F."/>
            <person name="Ohara O."/>
            <person name="Okazaki Y."/>
            <person name="Orlando V."/>
            <person name="Pang K.C."/>
            <person name="Pavan W.J."/>
            <person name="Pavesi G."/>
            <person name="Pesole G."/>
            <person name="Petrovsky N."/>
            <person name="Piazza S."/>
            <person name="Reed J."/>
            <person name="Reid J.F."/>
            <person name="Ring B.Z."/>
            <person name="Ringwald M."/>
            <person name="Rost B."/>
            <person name="Ruan Y."/>
            <person name="Salzberg S.L."/>
            <person name="Sandelin A."/>
            <person name="Schneider C."/>
            <person name="Schoenbach C."/>
            <person name="Sekiguchi K."/>
            <person name="Semple C.A."/>
            <person name="Seno S."/>
            <person name="Sessa L."/>
            <person name="Sheng Y."/>
            <person name="Shibata Y."/>
            <person name="Shimada H."/>
            <person name="Shimada K."/>
            <person name="Silva D."/>
            <person name="Sinclair B."/>
            <person name="Sperling S."/>
            <person name="Stupka E."/>
            <person name="Sugiura K."/>
            <person name="Sultana R."/>
            <person name="Takenaka Y."/>
            <person name="Taki K."/>
            <person name="Tammoja K."/>
            <person name="Tan S.L."/>
            <person name="Tang S."/>
            <person name="Taylor M.S."/>
            <person name="Tegner J."/>
            <person name="Teichmann S.A."/>
            <person name="Ueda H.R."/>
            <person name="van Nimwegen E."/>
            <person name="Verardo R."/>
            <person name="Wei C.L."/>
            <person name="Yagi K."/>
            <person name="Yamanishi H."/>
            <person name="Zabarovsky E."/>
            <person name="Zhu S."/>
            <person name="Zimmer A."/>
            <person name="Hide W."/>
            <person name="Bult C."/>
            <person name="Grimmond S.M."/>
            <person name="Teasdale R.D."/>
            <person name="Liu E.T."/>
            <person name="Brusic V."/>
            <person name="Quackenbush J."/>
            <person name="Wahlestedt C."/>
            <person name="Mattick J.S."/>
            <person name="Hume D.A."/>
            <person name="Kai C."/>
            <person name="Sasaki D."/>
            <person name="Tomaru Y."/>
            <person name="Fukuda S."/>
            <person name="Kanamori-Katayama M."/>
            <person name="Suzuki M."/>
            <person name="Aoki J."/>
            <person name="Arakawa T."/>
            <person name="Iida J."/>
            <person name="Imamura K."/>
            <person name="Itoh M."/>
            <person name="Kato T."/>
            <person name="Kawaji H."/>
            <person name="Kawagashira N."/>
            <person name="Kawashima T."/>
            <person name="Kojima M."/>
            <person name="Kondo S."/>
            <person name="Konno H."/>
            <person name="Nakano K."/>
            <person name="Ninomiya N."/>
            <person name="Nishio T."/>
            <person name="Okada M."/>
            <person name="Plessy C."/>
            <person name="Shibata K."/>
            <person name="Shiraki T."/>
            <person name="Suzuki S."/>
            <person name="Tagami M."/>
            <person name="Waki K."/>
            <person name="Watahiki A."/>
            <person name="Okamura-Oho Y."/>
            <person name="Suzuki H."/>
            <person name="Kawai J."/>
            <person name="Hayashizaki Y."/>
        </authorList>
    </citation>
    <scope>NUCLEOTIDE SEQUENCE [LARGE SCALE MRNA]</scope>
    <source>
        <strain>C57BL/6J</strain>
        <tissue>Embryo</tissue>
        <tissue>Small intestine</tissue>
    </source>
</reference>
<reference key="2">
    <citation type="journal article" date="2004" name="Genome Res.">
        <title>The status, quality, and expansion of the NIH full-length cDNA project: the Mammalian Gene Collection (MGC).</title>
        <authorList>
            <consortium name="The MGC Project Team"/>
        </authorList>
    </citation>
    <scope>NUCLEOTIDE SEQUENCE [LARGE SCALE MRNA]</scope>
    <source>
        <strain>C57BL/6J</strain>
        <tissue>Brain</tissue>
    </source>
</reference>
<reference key="3">
    <citation type="journal article" date="1994" name="Nucleic Acids Res.">
        <title>U21, a novel small nucleolar RNA with a 13 nt. complementarity to 28S rRNA, is encoded in an intron of ribosomal protein L5 gene in chicken and mammals.</title>
        <authorList>
            <person name="Qu L.H."/>
            <person name="Nicoloso M."/>
            <person name="Michot B."/>
            <person name="Azum M.C."/>
            <person name="Caizergues-Ferrer M."/>
            <person name="Renalier M.H."/>
            <person name="Bachellerie J.-P."/>
        </authorList>
    </citation>
    <scope>NUCLEOTIDE SEQUENCE [GENOMIC DNA] OF 162-179</scope>
</reference>
<reference key="4">
    <citation type="submission" date="1994-12" db="EMBL/GenBank/DDBJ databases">
        <authorList>
            <person name="Zach O.R.F."/>
        </authorList>
    </citation>
    <scope>NUCLEOTIDE SEQUENCE [MRNA] OF 206-297</scope>
    <source>
        <strain>NMRE</strain>
        <tissue>Brain</tissue>
    </source>
</reference>
<reference key="5">
    <citation type="journal article" date="2010" name="Cell">
        <title>A tissue-specific atlas of mouse protein phosphorylation and expression.</title>
        <authorList>
            <person name="Huttlin E.L."/>
            <person name="Jedrychowski M.P."/>
            <person name="Elias J.E."/>
            <person name="Goswami T."/>
            <person name="Rad R."/>
            <person name="Beausoleil S.A."/>
            <person name="Villen J."/>
            <person name="Haas W."/>
            <person name="Sowa M.E."/>
            <person name="Gygi S.P."/>
        </authorList>
    </citation>
    <scope>IDENTIFICATION BY MASS SPECTROMETRY [LARGE SCALE ANALYSIS]</scope>
    <source>
        <tissue>Brain</tissue>
        <tissue>Brown adipose tissue</tissue>
        <tissue>Heart</tissue>
        <tissue>Kidney</tissue>
        <tissue>Liver</tissue>
        <tissue>Lung</tissue>
        <tissue>Pancreas</tissue>
        <tissue>Spleen</tissue>
        <tissue>Testis</tissue>
    </source>
</reference>
<reference key="6">
    <citation type="journal article" date="2013" name="Mol. Cell">
        <title>SIRT5-mediated lysine desuccinylation impacts diverse metabolic pathways.</title>
        <authorList>
            <person name="Park J."/>
            <person name="Chen Y."/>
            <person name="Tishkoff D.X."/>
            <person name="Peng C."/>
            <person name="Tan M."/>
            <person name="Dai L."/>
            <person name="Xie Z."/>
            <person name="Zhang Y."/>
            <person name="Zwaans B.M."/>
            <person name="Skinner M.E."/>
            <person name="Lombard D.B."/>
            <person name="Zhao Y."/>
        </authorList>
    </citation>
    <scope>ACETYLATION [LARGE SCALE ANALYSIS] AT LYS-220</scope>
    <scope>IDENTIFICATION BY MASS SPECTROMETRY [LARGE SCALE ANALYSIS]</scope>
    <source>
        <tissue>Embryonic fibroblast</tissue>
    </source>
</reference>
<reference evidence="5 6" key="7">
    <citation type="journal article" date="2022" name="Nature">
        <title>A male germ-cell-specific ribosome controls male fertility.</title>
        <authorList>
            <person name="Li H."/>
            <person name="Huo Y."/>
            <person name="He X."/>
            <person name="Yao L."/>
            <person name="Zhang H."/>
            <person name="Cui Y."/>
            <person name="Xiao H."/>
            <person name="Xie W."/>
            <person name="Zhang D."/>
            <person name="Wang Y."/>
            <person name="Zhang S."/>
            <person name="Tu H."/>
            <person name="Cheng Y."/>
            <person name="Guo Y."/>
            <person name="Cao X."/>
            <person name="Zhu Y."/>
            <person name="Jiang T."/>
            <person name="Guo X."/>
            <person name="Qin Y."/>
            <person name="Sha J."/>
        </authorList>
    </citation>
    <scope>STRUCTURE BY ELECTRON MICROSCOPY (3.03 ANGSTROMS) OF RIBOSOME</scope>
    <scope>FUNCTION</scope>
    <scope>SUBUNIT</scope>
    <scope>SUBCELLULAR LOCATION</scope>
</reference>
<dbReference type="EMBL" id="AK008489">
    <property type="protein sequence ID" value="BAB25695.1"/>
    <property type="molecule type" value="mRNA"/>
</dbReference>
<dbReference type="EMBL" id="AK013107">
    <property type="protein sequence ID" value="BAB28652.1"/>
    <property type="molecule type" value="mRNA"/>
</dbReference>
<dbReference type="EMBL" id="BC026934">
    <property type="protein sequence ID" value="AAH26934.1"/>
    <property type="molecule type" value="mRNA"/>
</dbReference>
<dbReference type="EMBL" id="BC083318">
    <property type="protein sequence ID" value="AAH83318.1"/>
    <property type="molecule type" value="mRNA"/>
</dbReference>
<dbReference type="EMBL" id="Z35311">
    <property type="status" value="NOT_ANNOTATED_CDS"/>
    <property type="molecule type" value="Genomic_DNA"/>
</dbReference>
<dbReference type="EMBL" id="X83590">
    <property type="protein sequence ID" value="CAA58570.1"/>
    <property type="molecule type" value="mRNA"/>
</dbReference>
<dbReference type="CCDS" id="CCDS39199.1"/>
<dbReference type="PIR" id="S50100">
    <property type="entry name" value="S50100"/>
</dbReference>
<dbReference type="RefSeq" id="NP_058676.1">
    <property type="nucleotide sequence ID" value="NM_016980.2"/>
</dbReference>
<dbReference type="PDB" id="6SWA">
    <property type="method" value="EM"/>
    <property type="resolution" value="3.10 A"/>
    <property type="chains" value="D=1-297"/>
</dbReference>
<dbReference type="PDB" id="7CPU">
    <property type="method" value="EM"/>
    <property type="resolution" value="2.82 A"/>
    <property type="chains" value="LD=1-297"/>
</dbReference>
<dbReference type="PDB" id="7CPV">
    <property type="method" value="EM"/>
    <property type="resolution" value="3.03 A"/>
    <property type="chains" value="LD=1-297"/>
</dbReference>
<dbReference type="PDB" id="7LS1">
    <property type="method" value="EM"/>
    <property type="resolution" value="3.30 A"/>
    <property type="chains" value="G2=1-297"/>
</dbReference>
<dbReference type="PDB" id="7LS2">
    <property type="method" value="EM"/>
    <property type="resolution" value="3.10 A"/>
    <property type="chains" value="G2=1-297"/>
</dbReference>
<dbReference type="PDBsum" id="6SWA"/>
<dbReference type="PDBsum" id="7CPU"/>
<dbReference type="PDBsum" id="7CPV"/>
<dbReference type="PDBsum" id="7LS1"/>
<dbReference type="PDBsum" id="7LS2"/>
<dbReference type="EMDB" id="EMD-10321"/>
<dbReference type="EMDB" id="EMD-23500"/>
<dbReference type="EMDB" id="EMD-23501"/>
<dbReference type="EMDB" id="EMD-30432"/>
<dbReference type="EMDB" id="EMD-30433"/>
<dbReference type="SMR" id="P47962"/>
<dbReference type="BioGRID" id="433810">
    <property type="interactions" value="86"/>
</dbReference>
<dbReference type="ComplexPortal" id="CPX-5262">
    <property type="entry name" value="60S cytosolic large ribosomal subunit"/>
</dbReference>
<dbReference type="ComplexPortal" id="CPX-7662">
    <property type="entry name" value="60S cytosolic large ribosomal subunit, testis-specific variant"/>
</dbReference>
<dbReference type="ComplexPortal" id="CPX-7663">
    <property type="entry name" value="60S cytosolic large ribosomal subunit, striated muscle variant"/>
</dbReference>
<dbReference type="CORUM" id="P47962"/>
<dbReference type="FunCoup" id="P47962">
    <property type="interactions" value="2799"/>
</dbReference>
<dbReference type="IntAct" id="P47962">
    <property type="interactions" value="8"/>
</dbReference>
<dbReference type="MINT" id="P47962"/>
<dbReference type="STRING" id="10090.ENSMUSP00000080854"/>
<dbReference type="GlyGen" id="P47962">
    <property type="glycosylation" value="1 site, 1 O-linked glycan (1 site)"/>
</dbReference>
<dbReference type="iPTMnet" id="P47962"/>
<dbReference type="MetOSite" id="P47962"/>
<dbReference type="PhosphoSitePlus" id="P47962"/>
<dbReference type="SwissPalm" id="P47962"/>
<dbReference type="jPOST" id="P47962"/>
<dbReference type="PaxDb" id="10090-ENSMUSP00000080854"/>
<dbReference type="PeptideAtlas" id="P47962"/>
<dbReference type="ProteomicsDB" id="299823"/>
<dbReference type="Pumba" id="P47962"/>
<dbReference type="Ensembl" id="ENSMUST00000082223.13">
    <property type="protein sequence ID" value="ENSMUSP00000080854.7"/>
    <property type="gene ID" value="ENSMUSG00000058558.13"/>
</dbReference>
<dbReference type="GeneID" id="100503670"/>
<dbReference type="KEGG" id="mmu:100503670"/>
<dbReference type="UCSC" id="uc008ynh.2">
    <property type="organism name" value="mouse"/>
</dbReference>
<dbReference type="AGR" id="MGI:102854"/>
<dbReference type="CTD" id="6125"/>
<dbReference type="MGI" id="MGI:102854">
    <property type="gene designation" value="Rpl5"/>
</dbReference>
<dbReference type="VEuPathDB" id="HostDB:ENSMUSG00000058558"/>
<dbReference type="eggNOG" id="KOG0875">
    <property type="taxonomic scope" value="Eukaryota"/>
</dbReference>
<dbReference type="GeneTree" id="ENSGT00950000183210"/>
<dbReference type="HOGENOM" id="CLU_056222_1_0_1"/>
<dbReference type="InParanoid" id="P47962"/>
<dbReference type="OMA" id="CQIASAH"/>
<dbReference type="OrthoDB" id="9577612at2759"/>
<dbReference type="PhylomeDB" id="P47962"/>
<dbReference type="TreeFam" id="TF300044"/>
<dbReference type="Reactome" id="R-MMU-156827">
    <property type="pathway name" value="L13a-mediated translational silencing of Ceruloplasmin expression"/>
</dbReference>
<dbReference type="Reactome" id="R-MMU-1799339">
    <property type="pathway name" value="SRP-dependent cotranslational protein targeting to membrane"/>
</dbReference>
<dbReference type="Reactome" id="R-MMU-6791226">
    <property type="pathway name" value="Major pathway of rRNA processing in the nucleolus and cytosol"/>
</dbReference>
<dbReference type="Reactome" id="R-MMU-72689">
    <property type="pathway name" value="Formation of a pool of free 40S subunits"/>
</dbReference>
<dbReference type="Reactome" id="R-MMU-72706">
    <property type="pathway name" value="GTP hydrolysis and joining of the 60S ribosomal subunit"/>
</dbReference>
<dbReference type="Reactome" id="R-MMU-975956">
    <property type="pathway name" value="Nonsense Mediated Decay (NMD) independent of the Exon Junction Complex (EJC)"/>
</dbReference>
<dbReference type="Reactome" id="R-MMU-975957">
    <property type="pathway name" value="Nonsense Mediated Decay (NMD) enhanced by the Exon Junction Complex (EJC)"/>
</dbReference>
<dbReference type="BioGRID-ORCS" id="100503670">
    <property type="hits" value="25 hits in 55 CRISPR screens"/>
</dbReference>
<dbReference type="CD-CODE" id="CE726F99">
    <property type="entry name" value="Postsynaptic density"/>
</dbReference>
<dbReference type="ChiTaRS" id="Rpl5">
    <property type="organism name" value="mouse"/>
</dbReference>
<dbReference type="PRO" id="PR:P47962"/>
<dbReference type="Proteomes" id="UP000000589">
    <property type="component" value="Chromosome 5"/>
</dbReference>
<dbReference type="RNAct" id="P47962">
    <property type="molecule type" value="protein"/>
</dbReference>
<dbReference type="Bgee" id="ENSMUSG00000058558">
    <property type="expression patterns" value="Expressed in epiblast (generic) and 76 other cell types or tissues"/>
</dbReference>
<dbReference type="ExpressionAtlas" id="P47962">
    <property type="expression patterns" value="baseline and differential"/>
</dbReference>
<dbReference type="GO" id="GO:0005737">
    <property type="term" value="C:cytoplasm"/>
    <property type="evidence" value="ECO:0000314"/>
    <property type="project" value="ComplexPortal"/>
</dbReference>
<dbReference type="GO" id="GO:0005829">
    <property type="term" value="C:cytosol"/>
    <property type="evidence" value="ECO:0000304"/>
    <property type="project" value="Reactome"/>
</dbReference>
<dbReference type="GO" id="GO:0022625">
    <property type="term" value="C:cytosolic large ribosomal subunit"/>
    <property type="evidence" value="ECO:0000314"/>
    <property type="project" value="UniProtKB"/>
</dbReference>
<dbReference type="GO" id="GO:0005730">
    <property type="term" value="C:nucleolus"/>
    <property type="evidence" value="ECO:0000250"/>
    <property type="project" value="UniProtKB"/>
</dbReference>
<dbReference type="GO" id="GO:0098794">
    <property type="term" value="C:postsynapse"/>
    <property type="evidence" value="ECO:0000303"/>
    <property type="project" value="SynGO"/>
</dbReference>
<dbReference type="GO" id="GO:0098793">
    <property type="term" value="C:presynapse"/>
    <property type="evidence" value="ECO:0000303"/>
    <property type="project" value="SynGO"/>
</dbReference>
<dbReference type="GO" id="GO:1990904">
    <property type="term" value="C:ribonucleoprotein complex"/>
    <property type="evidence" value="ECO:0000266"/>
    <property type="project" value="MGI"/>
</dbReference>
<dbReference type="GO" id="GO:0005840">
    <property type="term" value="C:ribosome"/>
    <property type="evidence" value="ECO:0000303"/>
    <property type="project" value="SynGO"/>
</dbReference>
<dbReference type="GO" id="GO:0045202">
    <property type="term" value="C:synapse"/>
    <property type="evidence" value="ECO:0000314"/>
    <property type="project" value="SynGO"/>
</dbReference>
<dbReference type="GO" id="GO:0008097">
    <property type="term" value="F:5S rRNA binding"/>
    <property type="evidence" value="ECO:0007669"/>
    <property type="project" value="InterPro"/>
</dbReference>
<dbReference type="GO" id="GO:0003735">
    <property type="term" value="F:structural constituent of ribosome"/>
    <property type="evidence" value="ECO:0000314"/>
    <property type="project" value="UniProtKB"/>
</dbReference>
<dbReference type="GO" id="GO:0002181">
    <property type="term" value="P:cytoplasmic translation"/>
    <property type="evidence" value="ECO:0000303"/>
    <property type="project" value="ComplexPortal"/>
</dbReference>
<dbReference type="GO" id="GO:0140242">
    <property type="term" value="P:translation at postsynapse"/>
    <property type="evidence" value="ECO:0000303"/>
    <property type="project" value="SynGO"/>
</dbReference>
<dbReference type="GO" id="GO:0140236">
    <property type="term" value="P:translation at presynapse"/>
    <property type="evidence" value="ECO:0000303"/>
    <property type="project" value="SynGO"/>
</dbReference>
<dbReference type="CDD" id="cd00432">
    <property type="entry name" value="Ribosomal_L18_L5e"/>
    <property type="match status" value="1"/>
</dbReference>
<dbReference type="FunFam" id="3.30.420.100:FF:000011">
    <property type="entry name" value="60S ribosomal protein L5"/>
    <property type="match status" value="1"/>
</dbReference>
<dbReference type="FunFam" id="3.30.420.100:FF:000013">
    <property type="entry name" value="60S ribosomal protein L5 isoform X2"/>
    <property type="match status" value="1"/>
</dbReference>
<dbReference type="Gene3D" id="3.30.420.100">
    <property type="match status" value="1"/>
</dbReference>
<dbReference type="HAMAP" id="MF_01337_A">
    <property type="entry name" value="Ribosomal_uL18_A"/>
    <property type="match status" value="1"/>
</dbReference>
<dbReference type="InterPro" id="IPR005485">
    <property type="entry name" value="Rbsml_uL18_euk"/>
</dbReference>
<dbReference type="InterPro" id="IPR025607">
    <property type="entry name" value="Ribosomal_uL18_C_euk"/>
</dbReference>
<dbReference type="PANTHER" id="PTHR23410:SF12">
    <property type="entry name" value="LARGE RIBOSOMAL SUBUNIT PROTEIN UL18"/>
    <property type="match status" value="1"/>
</dbReference>
<dbReference type="PANTHER" id="PTHR23410">
    <property type="entry name" value="RIBOSOMAL PROTEIN L5-RELATED"/>
    <property type="match status" value="1"/>
</dbReference>
<dbReference type="Pfam" id="PF14204">
    <property type="entry name" value="Ribosomal_L18_c"/>
    <property type="match status" value="1"/>
</dbReference>
<dbReference type="Pfam" id="PF17144">
    <property type="entry name" value="Ribosomal_L5e"/>
    <property type="match status" value="1"/>
</dbReference>
<dbReference type="PRINTS" id="PR00058">
    <property type="entry name" value="RIBOSOMALL5"/>
</dbReference>
<dbReference type="SUPFAM" id="SSF53137">
    <property type="entry name" value="Translational machinery components"/>
    <property type="match status" value="1"/>
</dbReference>
<protein>
    <recommendedName>
        <fullName evidence="4">Large ribosomal subunit protein uL18</fullName>
    </recommendedName>
    <alternativeName>
        <fullName>60S ribosomal protein L5</fullName>
    </alternativeName>
</protein>
<accession>P47962</accession>
<accession>Q9CR19</accession>
<proteinExistence type="evidence at protein level"/>
<keyword id="KW-0002">3D-structure</keyword>
<keyword id="KW-0007">Acetylation</keyword>
<keyword id="KW-0963">Cytoplasm</keyword>
<keyword id="KW-1017">Isopeptide bond</keyword>
<keyword id="KW-0539">Nucleus</keyword>
<keyword id="KW-0597">Phosphoprotein</keyword>
<keyword id="KW-1185">Reference proteome</keyword>
<keyword id="KW-0687">Ribonucleoprotein</keyword>
<keyword id="KW-0689">Ribosomal protein</keyword>
<keyword id="KW-0694">RNA-binding</keyword>
<keyword id="KW-0699">rRNA-binding</keyword>
<keyword id="KW-0832">Ubl conjugation</keyword>